<accession>P0DW17</accession>
<comment type="function">
    <text evidence="1">Moderately activates human somatostatin receptors (SSTR) with a preferential activation of SSTR1 and SSTR4. In vivo, does not cause behavioral changes in mice within a few minutes of intracranial injection, but causes a progressive loss of movement thereafter. Four to five hours after injection, mice recover, even with the highest dose tested. Shows antinociception and antihyperalgesia activities in two mouse models of acute pain, most probably by acting outside the central nervous system.</text>
</comment>
<comment type="subcellular location">
    <subcellularLocation>
        <location evidence="6">Secreted</location>
    </subcellularLocation>
</comment>
<comment type="tissue specificity">
    <text evidence="6">Expressed by the venom duct.</text>
</comment>
<comment type="domain">
    <text evidence="5">The cysteine framework is C-C.</text>
</comment>
<comment type="miscellaneous">
    <text evidence="1">This peptide is an evolutionarily optimized stable analog of somatostatin. In addition, it adopts nearly identical conformations as in the somatostatin drug analog Octreotide. As this drug, it contains a D-Trp at the same position, whose synthesis is a common strategy used for enhancing the metabolic stability of compounds in drug design.</text>
</comment>
<comment type="miscellaneous">
    <text evidence="1">Consomatins evolved by gene duplication of a 'Somatostatin and related peptides (SSRP)' gene expressed in the snail neuroendocrine system.</text>
</comment>
<comment type="miscellaneous">
    <text evidence="1">Negative results: does not activate any of the other 313 GPCRs tested. Shows little or no activating activity at the SSTR2, SSTR3 and SSTR5.</text>
</comment>
<comment type="similarity">
    <text evidence="5">Belongs to the conotoxin C superfamily. Consomatin family.</text>
</comment>
<organism>
    <name type="scientific">Conus rolani</name>
    <name type="common">Cone snail</name>
    <dbReference type="NCBI Taxonomy" id="745791"/>
    <lineage>
        <taxon>Eukaryota</taxon>
        <taxon>Metazoa</taxon>
        <taxon>Spiralia</taxon>
        <taxon>Lophotrochozoa</taxon>
        <taxon>Mollusca</taxon>
        <taxon>Gastropoda</taxon>
        <taxon>Caenogastropoda</taxon>
        <taxon>Neogastropoda</taxon>
        <taxon>Conoidea</taxon>
        <taxon>Conidae</taxon>
        <taxon>Conus</taxon>
        <taxon>Asprella</taxon>
    </lineage>
</organism>
<sequence>MQTAYWLMVMMMVWITAPLYEGGKPNDVIRGLVPDDLTPQFILRSLISRRRSDKDVRADQTCIWKTWCPPSLWRRHDRKGKD</sequence>
<dbReference type="GO" id="GO:0005576">
    <property type="term" value="C:extracellular region"/>
    <property type="evidence" value="ECO:0007669"/>
    <property type="project" value="UniProtKB-SubCell"/>
</dbReference>
<dbReference type="GO" id="GO:0090729">
    <property type="term" value="F:toxin activity"/>
    <property type="evidence" value="ECO:0007669"/>
    <property type="project" value="UniProtKB-KW"/>
</dbReference>
<proteinExistence type="evidence at protein level"/>
<reference key="1">
    <citation type="journal article" date="2022" name="Sci. Adv.">
        <title>Somatostatin venom analogs evolved by fish-hunting cone snails: from prey capture behavior to identifying drug leads.</title>
        <authorList>
            <person name="Ramiro I.B.L."/>
            <person name="Bjoern-Yoshimoto W.E."/>
            <person name="Imperial J.S."/>
            <person name="Gajewiak J."/>
            <person name="Salcedo P.F."/>
            <person name="Watkins M."/>
            <person name="Taylor D."/>
            <person name="Resager W."/>
            <person name="Ueberheide B."/>
            <person name="Braeuner-Osborne H."/>
            <person name="Whitby F.G."/>
            <person name="Hill C.P."/>
            <person name="Martin L.F."/>
            <person name="Patwardhan A."/>
            <person name="Concepcion G.P."/>
            <person name="Olivera B.M."/>
            <person name="Safavi-Hemami H."/>
        </authorList>
    </citation>
    <scope>NUCLEOTIDE SEQUENCE [MRNA]</scope>
    <scope>PROBABLE D-AMINO ACID AT TRP-64</scope>
    <scope>PROBABLE HYDROXYLATION AT PRO-69 AND PRO-70</scope>
    <scope>DISULFIDE BOND</scope>
    <source>
        <tissue>Venom duct</tissue>
    </source>
</reference>
<keyword id="KW-0208">D-amino acid</keyword>
<keyword id="KW-1015">Disulfide bond</keyword>
<keyword id="KW-1213">G-protein coupled receptor impairing toxin</keyword>
<keyword id="KW-0379">Hydroxylation</keyword>
<keyword id="KW-0964">Secreted</keyword>
<keyword id="KW-0732">Signal</keyword>
<keyword id="KW-0800">Toxin</keyword>
<feature type="signal peptide" evidence="2">
    <location>
        <begin position="1"/>
        <end position="22"/>
    </location>
</feature>
<feature type="propeptide" id="PRO_0000456107" evidence="6">
    <location>
        <begin position="23"/>
        <end position="57"/>
    </location>
</feature>
<feature type="peptide" id="PRO_0000456108" description="Consomatin Ro2" evidence="3">
    <location>
        <begin position="58"/>
        <end position="71"/>
    </location>
</feature>
<feature type="propeptide" id="PRO_0000456109" evidence="6">
    <location>
        <begin position="72"/>
        <end position="82"/>
    </location>
</feature>
<feature type="modified residue" description="D-tryptophan" evidence="1 6">
    <location>
        <position position="64"/>
    </location>
</feature>
<feature type="modified residue" description="4-hydroxyproline" evidence="6">
    <location>
        <position position="69"/>
    </location>
</feature>
<feature type="modified residue" description="4-hydroxyproline" evidence="1 6">
    <location>
        <position position="70"/>
    </location>
</feature>
<feature type="disulfide bond" evidence="1 6">
    <location>
        <begin position="62"/>
        <end position="68"/>
    </location>
</feature>
<protein>
    <recommendedName>
        <fullName evidence="4">Consomatin Ro2</fullName>
        <shortName evidence="5">ConSST Ro2</shortName>
    </recommendedName>
    <alternativeName>
        <fullName evidence="1">Somatostatin-related peptide</fullName>
        <shortName evidence="1">SSRP</shortName>
    </alternativeName>
</protein>
<evidence type="ECO:0000250" key="1">
    <source>
        <dbReference type="UniProtKB" id="P0DQT5"/>
    </source>
</evidence>
<evidence type="ECO:0000255" key="2"/>
<evidence type="ECO:0000269" key="3">
    <source>
    </source>
</evidence>
<evidence type="ECO:0000303" key="4">
    <source>
    </source>
</evidence>
<evidence type="ECO:0000305" key="5"/>
<evidence type="ECO:0000305" key="6">
    <source>
    </source>
</evidence>
<name>CSST2_CONRO</name>